<feature type="chain" id="PRO_1000089272" description="Adenylosuccinate synthetase">
    <location>
        <begin position="1"/>
        <end position="431"/>
    </location>
</feature>
<feature type="active site" description="Proton acceptor" evidence="1">
    <location>
        <position position="14"/>
    </location>
</feature>
<feature type="active site" description="Proton donor" evidence="1">
    <location>
        <position position="42"/>
    </location>
</feature>
<feature type="binding site" evidence="1">
    <location>
        <begin position="13"/>
        <end position="19"/>
    </location>
    <ligand>
        <name>GTP</name>
        <dbReference type="ChEBI" id="CHEBI:37565"/>
    </ligand>
</feature>
<feature type="binding site" description="in other chain" evidence="1">
    <location>
        <begin position="14"/>
        <end position="17"/>
    </location>
    <ligand>
        <name>IMP</name>
        <dbReference type="ChEBI" id="CHEBI:58053"/>
        <note>ligand shared between dimeric partners</note>
    </ligand>
</feature>
<feature type="binding site" evidence="1">
    <location>
        <position position="14"/>
    </location>
    <ligand>
        <name>Mg(2+)</name>
        <dbReference type="ChEBI" id="CHEBI:18420"/>
    </ligand>
</feature>
<feature type="binding site" description="in other chain" evidence="1">
    <location>
        <begin position="39"/>
        <end position="42"/>
    </location>
    <ligand>
        <name>IMP</name>
        <dbReference type="ChEBI" id="CHEBI:58053"/>
        <note>ligand shared between dimeric partners</note>
    </ligand>
</feature>
<feature type="binding site" evidence="1">
    <location>
        <begin position="41"/>
        <end position="43"/>
    </location>
    <ligand>
        <name>GTP</name>
        <dbReference type="ChEBI" id="CHEBI:37565"/>
    </ligand>
</feature>
<feature type="binding site" evidence="1">
    <location>
        <position position="41"/>
    </location>
    <ligand>
        <name>Mg(2+)</name>
        <dbReference type="ChEBI" id="CHEBI:18420"/>
    </ligand>
</feature>
<feature type="binding site" description="in other chain" evidence="1">
    <location>
        <position position="130"/>
    </location>
    <ligand>
        <name>IMP</name>
        <dbReference type="ChEBI" id="CHEBI:58053"/>
        <note>ligand shared between dimeric partners</note>
    </ligand>
</feature>
<feature type="binding site" evidence="1">
    <location>
        <position position="144"/>
    </location>
    <ligand>
        <name>IMP</name>
        <dbReference type="ChEBI" id="CHEBI:58053"/>
        <note>ligand shared between dimeric partners</note>
    </ligand>
</feature>
<feature type="binding site" description="in other chain" evidence="1">
    <location>
        <position position="225"/>
    </location>
    <ligand>
        <name>IMP</name>
        <dbReference type="ChEBI" id="CHEBI:58053"/>
        <note>ligand shared between dimeric partners</note>
    </ligand>
</feature>
<feature type="binding site" description="in other chain" evidence="1">
    <location>
        <position position="240"/>
    </location>
    <ligand>
        <name>IMP</name>
        <dbReference type="ChEBI" id="CHEBI:58053"/>
        <note>ligand shared between dimeric partners</note>
    </ligand>
</feature>
<feature type="binding site" evidence="1">
    <location>
        <begin position="300"/>
        <end position="306"/>
    </location>
    <ligand>
        <name>substrate</name>
    </ligand>
</feature>
<feature type="binding site" description="in other chain" evidence="1">
    <location>
        <position position="304"/>
    </location>
    <ligand>
        <name>IMP</name>
        <dbReference type="ChEBI" id="CHEBI:58053"/>
        <note>ligand shared between dimeric partners</note>
    </ligand>
</feature>
<feature type="binding site" evidence="1">
    <location>
        <position position="306"/>
    </location>
    <ligand>
        <name>GTP</name>
        <dbReference type="ChEBI" id="CHEBI:37565"/>
    </ligand>
</feature>
<feature type="binding site" evidence="1">
    <location>
        <begin position="332"/>
        <end position="334"/>
    </location>
    <ligand>
        <name>GTP</name>
        <dbReference type="ChEBI" id="CHEBI:37565"/>
    </ligand>
</feature>
<feature type="binding site" evidence="1">
    <location>
        <begin position="414"/>
        <end position="416"/>
    </location>
    <ligand>
        <name>GTP</name>
        <dbReference type="ChEBI" id="CHEBI:37565"/>
    </ligand>
</feature>
<accession>A9IK82</accession>
<name>PURA_BORPD</name>
<protein>
    <recommendedName>
        <fullName evidence="1">Adenylosuccinate synthetase</fullName>
        <shortName evidence="1">AMPSase</shortName>
        <shortName evidence="1">AdSS</shortName>
        <ecNumber evidence="1">6.3.4.4</ecNumber>
    </recommendedName>
    <alternativeName>
        <fullName evidence="1">IMP--aspartate ligase</fullName>
    </alternativeName>
</protein>
<gene>
    <name evidence="1" type="primary">purA</name>
    <name type="ordered locus">Bpet2031</name>
</gene>
<sequence length="431" mass="46089">MSKNVVVIGTQWGDEGKGKIVDWLAESVQGVVRFQGGHNAGHTLWINGKKTILRLIPSGIMHPGVTCFIGNGVVLSPEALLKEIEELEAAGLDVRSRLQISEICPLILPYHIAVDQAREARKGEGKIGTTGRGIGPAYEDKIARRALRVQDLFNPALFDEKLAELLDYHNFVLTQYLGAPAVSAAQVRDQAMALAPAIAPMVKDVSSNLYAMQQAGQRLLFEGAQGALLDVDHGTYPFVTSSNCLAGAASAGAGVGPQSLDYVLGITKAYTTRVGSGPFPTELVDEIGTRLATIGKEFGSVTGRPRRCGWFDGAALKRSVRLNGITGLCITKLDVLDGLESIQLGVGYRVNGEFRDVLPYGAHAVAQAEAVLEELPGWSESTVGITEYAKLPAAARRYLERVAEVCGVPIDLVSTGPDRNETIVLRHPLKG</sequence>
<reference key="1">
    <citation type="journal article" date="2008" name="BMC Genomics">
        <title>The missing link: Bordetella petrii is endowed with both the metabolic versatility of environmental bacteria and virulence traits of pathogenic Bordetellae.</title>
        <authorList>
            <person name="Gross R."/>
            <person name="Guzman C.A."/>
            <person name="Sebaihia M."/>
            <person name="Martin dos Santos V.A.P."/>
            <person name="Pieper D.H."/>
            <person name="Koebnik R."/>
            <person name="Lechner M."/>
            <person name="Bartels D."/>
            <person name="Buhrmester J."/>
            <person name="Choudhuri J.V."/>
            <person name="Ebensen T."/>
            <person name="Gaigalat L."/>
            <person name="Herrmann S."/>
            <person name="Khachane A.N."/>
            <person name="Larisch C."/>
            <person name="Link S."/>
            <person name="Linke B."/>
            <person name="Meyer F."/>
            <person name="Mormann S."/>
            <person name="Nakunst D."/>
            <person name="Rueckert C."/>
            <person name="Schneiker-Bekel S."/>
            <person name="Schulze K."/>
            <person name="Voerholter F.-J."/>
            <person name="Yevsa T."/>
            <person name="Engle J.T."/>
            <person name="Goldman W.E."/>
            <person name="Puehler A."/>
            <person name="Goebel U.B."/>
            <person name="Goesmann A."/>
            <person name="Bloecker H."/>
            <person name="Kaiser O."/>
            <person name="Martinez-Arias R."/>
        </authorList>
    </citation>
    <scope>NUCLEOTIDE SEQUENCE [LARGE SCALE GENOMIC DNA]</scope>
    <source>
        <strain>ATCC BAA-461 / DSM 12804 / CCUG 43448</strain>
    </source>
</reference>
<proteinExistence type="inferred from homology"/>
<organism>
    <name type="scientific">Bordetella petrii (strain ATCC BAA-461 / DSM 12804 / CCUG 43448)</name>
    <dbReference type="NCBI Taxonomy" id="340100"/>
    <lineage>
        <taxon>Bacteria</taxon>
        <taxon>Pseudomonadati</taxon>
        <taxon>Pseudomonadota</taxon>
        <taxon>Betaproteobacteria</taxon>
        <taxon>Burkholderiales</taxon>
        <taxon>Alcaligenaceae</taxon>
        <taxon>Bordetella</taxon>
    </lineage>
</organism>
<comment type="function">
    <text evidence="1">Plays an important role in the de novo pathway of purine nucleotide biosynthesis. Catalyzes the first committed step in the biosynthesis of AMP from IMP.</text>
</comment>
<comment type="catalytic activity">
    <reaction evidence="1">
        <text>IMP + L-aspartate + GTP = N(6)-(1,2-dicarboxyethyl)-AMP + GDP + phosphate + 2 H(+)</text>
        <dbReference type="Rhea" id="RHEA:15753"/>
        <dbReference type="ChEBI" id="CHEBI:15378"/>
        <dbReference type="ChEBI" id="CHEBI:29991"/>
        <dbReference type="ChEBI" id="CHEBI:37565"/>
        <dbReference type="ChEBI" id="CHEBI:43474"/>
        <dbReference type="ChEBI" id="CHEBI:57567"/>
        <dbReference type="ChEBI" id="CHEBI:58053"/>
        <dbReference type="ChEBI" id="CHEBI:58189"/>
        <dbReference type="EC" id="6.3.4.4"/>
    </reaction>
</comment>
<comment type="cofactor">
    <cofactor evidence="1">
        <name>Mg(2+)</name>
        <dbReference type="ChEBI" id="CHEBI:18420"/>
    </cofactor>
    <text evidence="1">Binds 1 Mg(2+) ion per subunit.</text>
</comment>
<comment type="pathway">
    <text evidence="1">Purine metabolism; AMP biosynthesis via de novo pathway; AMP from IMP: step 1/2.</text>
</comment>
<comment type="subunit">
    <text evidence="1">Homodimer.</text>
</comment>
<comment type="subcellular location">
    <subcellularLocation>
        <location evidence="1">Cytoplasm</location>
    </subcellularLocation>
</comment>
<comment type="similarity">
    <text evidence="1">Belongs to the adenylosuccinate synthetase family.</text>
</comment>
<keyword id="KW-0963">Cytoplasm</keyword>
<keyword id="KW-0342">GTP-binding</keyword>
<keyword id="KW-0436">Ligase</keyword>
<keyword id="KW-0460">Magnesium</keyword>
<keyword id="KW-0479">Metal-binding</keyword>
<keyword id="KW-0547">Nucleotide-binding</keyword>
<keyword id="KW-0658">Purine biosynthesis</keyword>
<evidence type="ECO:0000255" key="1">
    <source>
        <dbReference type="HAMAP-Rule" id="MF_00011"/>
    </source>
</evidence>
<dbReference type="EC" id="6.3.4.4" evidence="1"/>
<dbReference type="EMBL" id="AM902716">
    <property type="protein sequence ID" value="CAP42371.1"/>
    <property type="molecule type" value="Genomic_DNA"/>
</dbReference>
<dbReference type="SMR" id="A9IK82"/>
<dbReference type="STRING" id="94624.Bpet2031"/>
<dbReference type="KEGG" id="bpt:Bpet2031"/>
<dbReference type="eggNOG" id="COG0104">
    <property type="taxonomic scope" value="Bacteria"/>
</dbReference>
<dbReference type="UniPathway" id="UPA00075">
    <property type="reaction ID" value="UER00335"/>
</dbReference>
<dbReference type="Proteomes" id="UP000001225">
    <property type="component" value="Chromosome"/>
</dbReference>
<dbReference type="GO" id="GO:0005737">
    <property type="term" value="C:cytoplasm"/>
    <property type="evidence" value="ECO:0007669"/>
    <property type="project" value="UniProtKB-SubCell"/>
</dbReference>
<dbReference type="GO" id="GO:0004019">
    <property type="term" value="F:adenylosuccinate synthase activity"/>
    <property type="evidence" value="ECO:0007669"/>
    <property type="project" value="UniProtKB-UniRule"/>
</dbReference>
<dbReference type="GO" id="GO:0005525">
    <property type="term" value="F:GTP binding"/>
    <property type="evidence" value="ECO:0007669"/>
    <property type="project" value="UniProtKB-UniRule"/>
</dbReference>
<dbReference type="GO" id="GO:0000287">
    <property type="term" value="F:magnesium ion binding"/>
    <property type="evidence" value="ECO:0007669"/>
    <property type="project" value="UniProtKB-UniRule"/>
</dbReference>
<dbReference type="GO" id="GO:0044208">
    <property type="term" value="P:'de novo' AMP biosynthetic process"/>
    <property type="evidence" value="ECO:0007669"/>
    <property type="project" value="UniProtKB-UniRule"/>
</dbReference>
<dbReference type="GO" id="GO:0046040">
    <property type="term" value="P:IMP metabolic process"/>
    <property type="evidence" value="ECO:0007669"/>
    <property type="project" value="TreeGrafter"/>
</dbReference>
<dbReference type="CDD" id="cd03108">
    <property type="entry name" value="AdSS"/>
    <property type="match status" value="1"/>
</dbReference>
<dbReference type="FunFam" id="1.10.300.10:FF:000001">
    <property type="entry name" value="Adenylosuccinate synthetase"/>
    <property type="match status" value="1"/>
</dbReference>
<dbReference type="FunFam" id="3.90.170.10:FF:000001">
    <property type="entry name" value="Adenylosuccinate synthetase"/>
    <property type="match status" value="1"/>
</dbReference>
<dbReference type="Gene3D" id="3.40.440.10">
    <property type="entry name" value="Adenylosuccinate Synthetase, subunit A, domain 1"/>
    <property type="match status" value="1"/>
</dbReference>
<dbReference type="Gene3D" id="1.10.300.10">
    <property type="entry name" value="Adenylosuccinate Synthetase, subunit A, domain 2"/>
    <property type="match status" value="1"/>
</dbReference>
<dbReference type="Gene3D" id="3.90.170.10">
    <property type="entry name" value="Adenylosuccinate Synthetase, subunit A, domain 3"/>
    <property type="match status" value="1"/>
</dbReference>
<dbReference type="HAMAP" id="MF_00011">
    <property type="entry name" value="Adenylosucc_synth"/>
    <property type="match status" value="1"/>
</dbReference>
<dbReference type="InterPro" id="IPR018220">
    <property type="entry name" value="Adenylosuccin_syn_GTP-bd"/>
</dbReference>
<dbReference type="InterPro" id="IPR033128">
    <property type="entry name" value="Adenylosuccin_syn_Lys_AS"/>
</dbReference>
<dbReference type="InterPro" id="IPR042109">
    <property type="entry name" value="Adenylosuccinate_synth_dom1"/>
</dbReference>
<dbReference type="InterPro" id="IPR042110">
    <property type="entry name" value="Adenylosuccinate_synth_dom2"/>
</dbReference>
<dbReference type="InterPro" id="IPR042111">
    <property type="entry name" value="Adenylosuccinate_synth_dom3"/>
</dbReference>
<dbReference type="InterPro" id="IPR001114">
    <property type="entry name" value="Adenylosuccinate_synthetase"/>
</dbReference>
<dbReference type="InterPro" id="IPR027417">
    <property type="entry name" value="P-loop_NTPase"/>
</dbReference>
<dbReference type="NCBIfam" id="NF002223">
    <property type="entry name" value="PRK01117.1"/>
    <property type="match status" value="1"/>
</dbReference>
<dbReference type="NCBIfam" id="TIGR00184">
    <property type="entry name" value="purA"/>
    <property type="match status" value="1"/>
</dbReference>
<dbReference type="PANTHER" id="PTHR11846">
    <property type="entry name" value="ADENYLOSUCCINATE SYNTHETASE"/>
    <property type="match status" value="1"/>
</dbReference>
<dbReference type="PANTHER" id="PTHR11846:SF0">
    <property type="entry name" value="ADENYLOSUCCINATE SYNTHETASE"/>
    <property type="match status" value="1"/>
</dbReference>
<dbReference type="Pfam" id="PF00709">
    <property type="entry name" value="Adenylsucc_synt"/>
    <property type="match status" value="1"/>
</dbReference>
<dbReference type="SMART" id="SM00788">
    <property type="entry name" value="Adenylsucc_synt"/>
    <property type="match status" value="1"/>
</dbReference>
<dbReference type="SUPFAM" id="SSF52540">
    <property type="entry name" value="P-loop containing nucleoside triphosphate hydrolases"/>
    <property type="match status" value="1"/>
</dbReference>
<dbReference type="PROSITE" id="PS01266">
    <property type="entry name" value="ADENYLOSUCCIN_SYN_1"/>
    <property type="match status" value="1"/>
</dbReference>
<dbReference type="PROSITE" id="PS00513">
    <property type="entry name" value="ADENYLOSUCCIN_SYN_2"/>
    <property type="match status" value="1"/>
</dbReference>